<name>CEL3_PSEEC</name>
<reference evidence="40" key="1">
    <citation type="journal article" date="1999" name="Biochim. Biophys. Acta">
        <title>Primary structure of hemolytic lectin CEL-III from marine invertebrate Cucumaria echinata and its cDNA: structural similarity to the B-chain from plant lectin, ricin.</title>
        <authorList>
            <person name="Nakano M."/>
            <person name="Tabata S."/>
            <person name="Sugihara K."/>
            <person name="Kouzuma Y."/>
            <person name="Kimura M."/>
            <person name="Yamasaki N."/>
        </authorList>
    </citation>
    <scope>NUCLEOTIDE SEQUENCE [MRNA]</scope>
    <scope>PROTEIN SEQUENCE OF 11-24; 28-58; 63-100; 102-103; 105-167; 173-259; 264-303 AND 403-442</scope>
    <scope>MASS SPECTROMETRY</scope>
    <scope>PYROGLUTAMATE FORMATION AT GLN-11</scope>
</reference>
<reference key="2">
    <citation type="journal article" date="2003" name="J. Biochem.">
        <title>Characterization of functional domains of the hemolytic lectin CEL-III from the marine invertebrate Cucumaria echinata.</title>
        <authorList>
            <person name="Kouzuma Y."/>
            <person name="Suzuki Y."/>
            <person name="Nakano M."/>
            <person name="Matsuyama K."/>
            <person name="Tojo S."/>
            <person name="Kimura M."/>
            <person name="Yamasaki T."/>
            <person name="Aoyagi H."/>
            <person name="Hatakeyama T."/>
        </authorList>
    </citation>
    <scope>PROTEIN SEQUENCE OF 158-167; 291-300 AND 294-302</scope>
    <scope>FUNCTION</scope>
    <scope>SUBUNIT</scope>
    <scope>SUBCELLULAR LOCATION</scope>
    <scope>TISSUE SPECIFICITY</scope>
    <scope>DOMAIN</scope>
    <scope>CIRCULAR DICHROISM ANALYSIS OF THE C-TERMINUS</scope>
</reference>
<reference key="3">
    <citation type="journal article" date="2001" name="Biosci. Biotechnol. Biochem.">
        <title>Calcium ions stabilize a protein structure of hemolytic lectin CEL-III from marine invertebrate Cucumaria echinata.</title>
        <authorList>
            <person name="Sallay I."/>
            <person name="Tojo S."/>
            <person name="Nomiyama K."/>
            <person name="Kouzuma Y."/>
            <person name="Kimura M."/>
            <person name="Yamasaki N."/>
        </authorList>
    </citation>
    <scope>PROTEIN SEQUENCE OF 291-300</scope>
    <scope>FUNCTION</scope>
    <scope>COFACTOR</scope>
    <scope>ACTIVITY REGULATION</scope>
    <scope>SUBUNIT</scope>
    <scope>SUBCELLULAR LOCATION</scope>
    <scope>TISSUE SPECIFICITY</scope>
    <scope>DOMAIN</scope>
</reference>
<reference key="4">
    <citation type="journal article" date="1994" name="J. Biochem.">
        <title>Purification and characterization of four Ca(2+)-dependent lectins from the marine invertebrate, Cucumaria echinata.</title>
        <authorList>
            <person name="Hatakeyama T."/>
            <person name="Kohzaki H."/>
            <person name="Nagatomo H."/>
            <person name="Yamasaki N."/>
        </authorList>
    </citation>
    <scope>FUNCTION</scope>
    <scope>COFACTOR</scope>
    <scope>ACTIVITY REGULATION</scope>
</reference>
<reference key="5">
    <citation type="journal article" date="1995" name="J. Biol. Chem.">
        <title>Interaction of the hemolytic lectin CEL-III from the marine invertebrate Cucumaria echinata with the erythrocyte membrane.</title>
        <authorList>
            <person name="Hatakeyama T."/>
            <person name="Nagatomo H."/>
            <person name="Yamasaki N."/>
        </authorList>
    </citation>
    <scope>FUNCTION</scope>
    <scope>ACTIVITY REGULATION</scope>
    <scope>BIOPHYSICOCHEMICAL PROPERTIES</scope>
    <scope>SUBUNIT</scope>
    <scope>SUBCELLULAR LOCATION</scope>
</reference>
<reference key="6">
    <citation type="journal article" date="1996" name="J. Biol. Chem.">
        <title>Oligomerization of the hemolytic lectin CEL-III from the marine invertebrate Cucumaria echinata induced by the binding of carbohydrate ligands.</title>
        <authorList>
            <person name="Hatakeyama T."/>
            <person name="Furukawa M."/>
            <person name="Nagatomo H."/>
            <person name="Yamasaki N."/>
            <person name="Mori T."/>
        </authorList>
    </citation>
    <scope>FUNCTION</scope>
    <scope>BIOPHYSICOCHEMICAL PROPERTIES</scope>
    <scope>SUBUNIT</scope>
    <scope>SUBCELLULAR LOCATION</scope>
    <scope>TISSUE SPECIFICITY</scope>
    <scope>CIRCULAR DICHROISM ANALYSIS</scope>
</reference>
<reference key="7">
    <citation type="journal article" date="1997" name="FEBS Lett.">
        <title>Small-angle X-ray scattering study on CEL-III, a hemolytic lectin from Holothuroidea Cucumaria echinata, and its oligomer induced by the binding of specific carbohydrate.</title>
        <authorList>
            <person name="Fujisawa T."/>
            <person name="Kuwahara H."/>
            <person name="Hiromasa Y."/>
            <person name="Niidome T."/>
            <person name="Aoyagi H."/>
            <person name="Hatakeyama T."/>
        </authorList>
    </citation>
    <scope>FUNCTION</scope>
    <scope>SUBUNIT</scope>
    <scope>SUBCELLULAR LOCATION</scope>
    <scope>TISSUE SPECIFICITY</scope>
    <scope>MASS SPECTROMETRY</scope>
</reference>
<reference key="8">
    <citation type="journal article" date="1997" name="J. Biochem.">
        <title>Carbohydrate-binding properties of the hemolytic lectin CEL-III from the holothuroidea Cucumaria echinata as analyzed using carbohydrate-coated microplate.</title>
        <authorList>
            <person name="Hatakeyama T."/>
            <person name="Miyamoto Y."/>
            <person name="Nagatomo H."/>
            <person name="Sallay I."/>
            <person name="Yamasaki N."/>
        </authorList>
    </citation>
    <scope>FUNCTION</scope>
    <scope>COFACTOR</scope>
    <scope>ACTIVITY REGULATION</scope>
    <scope>BIOPHYSICOCHEMICAL PROPERTIES</scope>
    <scope>SUBCELLULAR LOCATION</scope>
    <scope>TISSUE SPECIFICITY</scope>
</reference>
<reference key="9">
    <citation type="journal article" date="1997" name="J. Biochem.">
        <title>Temperature- and pH-dependent cytotoxic effect of the hemolytic lectin CEL-III from the marine invertebrate Cucumaria echinata on various cell lines.</title>
        <authorList>
            <person name="Oda T."/>
            <person name="Tsuru M."/>
            <person name="Hatakeyama T."/>
            <person name="Nagatomo H."/>
            <person name="Muramatsu T."/>
            <person name="Yamasaki N."/>
        </authorList>
    </citation>
    <scope>FUNCTION</scope>
    <scope>ACTIVITY REGULATION</scope>
    <scope>BIOPHYSICOCHEMICAL PROPERTIES</scope>
    <scope>SUBCELLULAR LOCATION</scope>
    <scope>TISSUE SPECIFICITY</scope>
    <scope>BIOTECHNOLOGY</scope>
</reference>
<reference key="10">
    <citation type="journal article" date="1998" name="Biosci. Biotechnol. Biochem.">
        <title>Chemical modification of the hemolytic lectin CEL-III by succinic anhydride: involvement of amino groups in the oligomerization process.</title>
        <authorList>
            <person name="Hatakeyama T."/>
            <person name="Matsuyama Y."/>
            <person name="Funada T."/>
            <person name="Fukuyama S."/>
            <person name="Kuwahara H."/>
            <person name="Aoyagi H."/>
            <person name="Yamasaki N."/>
        </authorList>
    </citation>
    <scope>FUNCTION</scope>
    <scope>SUBUNIT</scope>
    <scope>CIRCULAR DICHROISM ANALYSIS</scope>
</reference>
<reference key="11">
    <citation type="journal article" date="1998" name="Biosci. Biotechnol. Biochem.">
        <title>Studies on the carbohydrate binding sites of the hemolytic lectin CEL-III isolated from the marine invertebrate Cucumaria echinata.</title>
        <authorList>
            <person name="Sallay I."/>
            <person name="Hatakeyama T."/>
            <person name="Yamasaki N."/>
        </authorList>
    </citation>
    <scope>FUNCTION</scope>
    <scope>BIOPHYSICOCHEMICAL PROPERTIES</scope>
</reference>
<reference key="12">
    <citation type="journal article" date="1999" name="Biosci. Biotechnol. Biochem.">
        <title>Molecular mechanism for pore-formation in lipid membranes by the hemolytic lectin CEL-III from marine invertebrate Cucumaria echinata.</title>
        <authorList>
            <person name="Kouriki-Nagatomo H."/>
            <person name="Hatakeyama T."/>
            <person name="Jelokhani-Niaraki M."/>
            <person name="Kondo M."/>
            <person name="Ehara T."/>
            <person name="Yamasaki N."/>
        </authorList>
    </citation>
    <scope>FUNCTION</scope>
    <scope>ACTIVITY REGULATION</scope>
    <scope>BIOPHYSICOCHEMICAL PROPERTIES</scope>
    <scope>SUBUNIT</scope>
    <scope>SUBCELLULAR LOCATION</scope>
    <scope>TISSUE SPECIFICITY</scope>
    <scope>CIRCULAR DICHROISM ANALYSIS</scope>
</reference>
<reference key="13">
    <citation type="journal article" date="1999" name="J. Biochem.">
        <title>Characterization of the interaction of hemolytic lectin CEL-III from the marine invertebrate, Cucumaria echinata, with artificial lipid membranes: involvement of neutral sphingoglycolipids in the pore-forming process.</title>
        <authorList>
            <person name="Hatakeyama T."/>
            <person name="Sato T."/>
            <person name="Taira E."/>
            <person name="Kuwahara H."/>
            <person name="Niidome T."/>
            <person name="Aoyagi H."/>
        </authorList>
    </citation>
    <scope>FUNCTION</scope>
    <scope>BIOPHYSICOCHEMICAL PROPERTIES</scope>
</reference>
<reference key="14">
    <citation type="journal article" date="1999" name="J. Biochem.">
        <title>Effect of the hemolytic lectin CEL-III from Holothuroidea Cucumaria echinata on the ANS fluorescence responses in sensitive MDCK and resistant CHO cells.</title>
        <authorList>
            <person name="Oda T."/>
            <person name="Shinmura N."/>
            <person name="Nishioka Y."/>
            <person name="Komatsu N."/>
            <person name="Hatakeyama T."/>
            <person name="Muramatsu T."/>
        </authorList>
    </citation>
    <scope>FUNCTION</scope>
    <scope>BIOPHYSICOCHEMICAL PROPERTIES</scope>
    <scope>SUBUNIT</scope>
    <scope>SUBCELLULAR LOCATION</scope>
    <scope>TISSUE SPECIFICITY</scope>
</reference>
<reference key="15">
    <citation type="journal article" date="2000" name="Biosci. Biotechnol. Biochem.">
        <title>Effects of chemical modification of carboxyl groups in the hemolytic lectin CEL-III on its hemolytic and carbohydrate-binding activities.</title>
        <authorList>
            <person name="Kuwahara H."/>
            <person name="Funada T."/>
            <person name="Hatakeyama T."/>
            <person name="Aoyagi H."/>
        </authorList>
    </citation>
    <scope>FUNCTION</scope>
    <scope>SUBUNIT</scope>
</reference>
<reference key="16">
    <citation type="journal article" date="2002" name="J. Biochem.">
        <title>Oligomerization process of the hemolytic lectin CEL-III purified from a sea cucumber, Cucumaria echinata.</title>
        <authorList>
            <person name="Kuwahara H."/>
            <person name="Yamasaki T."/>
            <person name="Hatakeyama T."/>
            <person name="Aoyagi H."/>
            <person name="Fujisawa T."/>
        </authorList>
    </citation>
    <scope>FUNCTION</scope>
    <scope>SUBUNIT</scope>
    <scope>CIRCULAR DICHROISM ANALYSIS</scope>
</reference>
<reference key="17">
    <citation type="journal article" date="2004" name="J. Biochem.">
        <title>Antibacterial activity of peptides derived from the C-terminal region of a hemolytic lectin, CEL-III, from the marine invertebrate Cucumaria echinata.</title>
        <authorList>
            <person name="Hatakeyama T."/>
            <person name="Suenaga T."/>
            <person name="Eto S."/>
            <person name="Niidome T."/>
            <person name="Aoyagi H."/>
        </authorList>
    </citation>
    <scope>DOMAIN</scope>
    <scope>BIOTECHNOLOGY</scope>
    <scope>MUTAGENESIS OF LYS-342; VAL-344; LYS-348; VAL-351; VAL-353; LYS-354; VAL-355 AND LYS-361</scope>
</reference>
<reference key="18">
    <citation type="journal article" date="2007" name="PLoS Pathog.">
        <title>Hemolytic C-type lectin CEL-III from sea cucumber expressed in transgenic mosquitoes impairs malaria parasite development.</title>
        <authorList>
            <person name="Yoshida S."/>
            <person name="Shimada Y."/>
            <person name="Kondoh D."/>
            <person name="Kouzuma Y."/>
            <person name="Ghosh A.K."/>
            <person name="Jacobs-Lorena M."/>
            <person name="Sinden R.E."/>
        </authorList>
    </citation>
    <scope>FUNCTION</scope>
    <scope>SUBCELLULAR LOCATION</scope>
    <scope>TISSUE SPECIFICITY</scope>
    <scope>BIOTECHNOLOGY</scope>
</reference>
<reference key="19">
    <citation type="journal article" date="2008" name="J. Biochem.">
        <title>Characterization of the {alpha}-helix region in domain 3 of the haemolytic lectin CEL-III: implications for self-oligomerization and haemolytic processes.</title>
        <authorList>
            <person name="Hisamatsu K."/>
            <person name="Tsuda N."/>
            <person name="Goda S."/>
            <person name="Hatakeyama T."/>
        </authorList>
    </citation>
    <scope>DOMAIN</scope>
    <scope>REGION</scope>
    <scope>MUTAGENESIS OF VAL-332; VAL-334; VAL-336; VAL-351; VAL-353 AND VAL-355</scope>
</reference>
<reference key="20">
    <citation type="journal article" date="2009" name="Biosci. Biotechnol. Biochem.">
        <title>Effects of Ca2+ on refolding of the recombinant hemolytic lectin CEL-III.</title>
        <authorList>
            <person name="Hisamatsu K."/>
            <person name="Unno H."/>
            <person name="Goda S."/>
            <person name="Hatakeyama T."/>
        </authorList>
    </citation>
    <scope>FUNCTION</scope>
    <scope>COFACTOR</scope>
    <scope>ACTIVITY REGULATION</scope>
    <scope>REGION</scope>
    <scope>CIRCULAR DICHROISM ANALYSIS</scope>
</reference>
<reference key="21">
    <citation type="journal article" date="2009" name="Protein Pept. Lett.">
        <title>Roles of the valine clusters in domain 3 of the hemolytic lectin CEL-III in its oligomerization and hemolytic abilities.</title>
        <authorList>
            <person name="Hisamatsu K."/>
            <person name="Unno H."/>
            <person name="Goda S."/>
            <person name="Hatakeyama T."/>
        </authorList>
    </citation>
    <scope>FUNCTION</scope>
    <scope>SUBUNIT</scope>
    <scope>MUTAGENESIS OF VAL-332; VAL-334; VAL-336; VAL-351; VAL-353 AND VAL-355</scope>
    <scope>CIRCULAR DICHROISM ANALYSIS</scope>
</reference>
<reference key="22">
    <citation type="journal article" date="2012" name="Biosci. Biotechnol. Biochem.">
        <title>Molecular cloning, functional expression, and characterization of isolectin genes of hemolytic lectin CEL-III from the marine invertebrate Cucumaria echinata.</title>
        <authorList>
            <person name="Shimizu Y."/>
            <person name="Yamazaki H."/>
            <person name="Yoshida S."/>
            <person name="Yonekura M."/>
            <person name="Kouzuma Y."/>
        </authorList>
    </citation>
    <scope>FUNCTION</scope>
    <scope>SUBUNIT</scope>
    <scope>SUBCELLULAR LOCATION</scope>
</reference>
<reference key="23">
    <citation type="journal article" date="2013" name="Acta Crystallogr. F">
        <title>Crystallization and preliminary crystallographic study of oligomers of the haemolytic lectin CEL-III from the sea cucumber Cucumaria echinata.</title>
        <authorList>
            <person name="Unno H."/>
            <person name="Hisamatsu K."/>
            <person name="Nagao T."/>
            <person name="Tateya Y."/>
            <person name="Matsumoto N."/>
            <person name="Goda S."/>
            <person name="Hatakeyama T."/>
        </authorList>
    </citation>
    <scope>FUNCTION</scope>
    <scope>SUBUNIT</scope>
    <scope>SUBCELLULAR LOCATION</scope>
    <scope>TISSUE SPECIFICITY</scope>
    <scope>CRYSTALLIZATION</scope>
</reference>
<reference key="24">
    <citation type="journal article" date="2013" name="Biochim. Biophys. Acta">
        <title>Identification of the amino acid residues involved in the hemolytic activity of the Cucumaria echinata lectin CEL-III.</title>
        <authorList>
            <person name="Hisamatsu K."/>
            <person name="Nagao T."/>
            <person name="Unno H."/>
            <person name="Goda S."/>
            <person name="Hatakeyama T."/>
        </authorList>
    </citation>
    <scope>FUNCTION</scope>
    <scope>SUBUNIT</scope>
    <scope>MUTAGENESIS OF GLN-55; SER-315; SER-325; ILE-340; LYS-342; ILE-345; LYS-348; SER-350; LYS-354; VAL-355; SER-360; LYS-361; ASN-365; TYR-375; ASP-381; GLU-385; ARG-388; ASP-405; LEU-407; ILE-413; LYS-415; ARG-418; LYS-430 AND ASP-435</scope>
    <scope>CIRCULAR DICHROISM ANALYSIS</scope>
</reference>
<reference key="25">
    <citation type="journal article" date="2013" name="Biosci. Biotechnol. Biochem.">
        <title>Effects of detergents on the oligomeric structures of hemolytic lectin CEL-III as determined by small-angle X-ray scattering.</title>
        <authorList>
            <person name="Goda S."/>
            <person name="Sadakata H."/>
            <person name="Unno H."/>
            <person name="Hatakeyama T."/>
        </authorList>
    </citation>
    <scope>FUNCTION</scope>
    <scope>SUBUNIT</scope>
</reference>
<reference key="26">
    <citation type="journal article" date="2016" name="Biosci. Biotechnol. Biochem.">
        <title>Effects of amino acid mutations in the pore-forming domain of the hemolytic lectin CEL-III.</title>
        <authorList>
            <person name="Nagao T."/>
            <person name="Masaki R."/>
            <person name="Unno H."/>
            <person name="Goda S."/>
            <person name="Hatakeyama T."/>
        </authorList>
    </citation>
    <scope>FUNCTION</scope>
    <scope>MUTAGENESIS OF ASP-381 AND LYS-415</scope>
</reference>
<reference evidence="41" key="27">
    <citation type="journal article" date="2004" name="J. Biol. Chem.">
        <title>Crystal structure of the hemolytic lectin CEL-III isolated from the marine invertebrate Cucumaria echinata: implications of domain structure for its membrane pore-formation mechanism.</title>
        <authorList>
            <person name="Uchida T."/>
            <person name="Yamasaki T."/>
            <person name="Eto S."/>
            <person name="Sugawara H."/>
            <person name="Kurisu G."/>
            <person name="Nakagawa A."/>
            <person name="Kusunoki M."/>
            <person name="Hatakeyama T."/>
        </authorList>
    </citation>
    <scope>X-RAY CRYSTALLOGRAPHY (1.70 ANGSTROMS) OF 11-442 IN COMPLEX WITH CALCIUM; CHLORIDE AND MAGNESIUM</scope>
    <scope>FUNCTION</scope>
    <scope>COFACTOR</scope>
    <scope>SUBCELLULAR LOCATION</scope>
    <scope>TISSUE SPECIFICITY</scope>
    <scope>DOMAIN</scope>
    <scope>PYROGLUTAMATE FORMATION AT GLN-11</scope>
    <scope>DISULFIDE BONDS</scope>
</reference>
<reference evidence="42 43" key="28">
    <citation type="journal article" date="2007" name="J. Biol. Chem.">
        <title>C-type lectin-like carbohydrate recognition of the hemolytic lectin CEL-III containing ricin-type -trefoil folds.</title>
        <authorList>
            <person name="Hatakeyama T."/>
            <person name="Unno H."/>
            <person name="Kouzuma Y."/>
            <person name="Uchida T."/>
            <person name="Eto S."/>
            <person name="Hidemura H."/>
            <person name="Kato N."/>
            <person name="Yonekura M."/>
            <person name="Kusunoki M."/>
        </authorList>
    </citation>
    <scope>X-RAY CRYSTALLOGRAPHY (1.70 ANGSTROMS) OF 11-442 IN COMPLEX WITH CALCIUM; MAGNESIUM; METHYL ALPHA-GALACTOSIDE AND N-ACETYLGALACTOSAMINE</scope>
    <scope>FUNCTION</scope>
    <scope>COFACTOR</scope>
    <scope>DOMAIN</scope>
    <scope>DISULFIDE BONDS</scope>
    <scope>MUTAGENESIS OF TYR-26; ASP-33; ASP-53; GLN-54 AND GLN-55</scope>
</reference>
<reference evidence="44" key="29">
    <citation type="journal article" date="2014" name="J. Biol. Chem.">
        <title>Hemolytic Lectin CEL-III Heptamerizes via a Large Structural Transition from alpha-Helices to a beta-Barrel during the Transmembrane Pore Formation Process.</title>
        <authorList>
            <person name="Unno H."/>
            <person name="Goda S."/>
            <person name="Hatakeyama T."/>
        </authorList>
    </citation>
    <scope>X-RAY CRYSTALLOGRAPHY (2.90 ANGSTROMS) OF 11-442 IN COMPLEX WITH CALCIUM; MAGNESIUM; FRUCTOSE AND GALACTOSE</scope>
    <scope>FUNCTION</scope>
    <scope>COFACTOR</scope>
    <scope>SUBUNIT</scope>
    <scope>SUBCELLULAR LOCATION</scope>
    <scope>TISSUE SPECIFICITY</scope>
    <scope>DISULFIDE BONDS</scope>
</reference>
<accession>Q868M7</accession>
<evidence type="ECO:0000255" key="1">
    <source>
        <dbReference type="PROSITE-ProRule" id="PRU00174"/>
    </source>
</evidence>
<evidence type="ECO:0000269" key="2">
    <source>
    </source>
</evidence>
<evidence type="ECO:0000269" key="3">
    <source>
    </source>
</evidence>
<evidence type="ECO:0000269" key="4">
    <source>
    </source>
</evidence>
<evidence type="ECO:0000269" key="5">
    <source>
    </source>
</evidence>
<evidence type="ECO:0000269" key="6">
    <source>
    </source>
</evidence>
<evidence type="ECO:0000269" key="7">
    <source>
    </source>
</evidence>
<evidence type="ECO:0000269" key="8">
    <source>
    </source>
</evidence>
<evidence type="ECO:0000269" key="9">
    <source>
    </source>
</evidence>
<evidence type="ECO:0000269" key="10">
    <source>
    </source>
</evidence>
<evidence type="ECO:0000269" key="11">
    <source>
    </source>
</evidence>
<evidence type="ECO:0000269" key="12">
    <source>
    </source>
</evidence>
<evidence type="ECO:0000269" key="13">
    <source>
    </source>
</evidence>
<evidence type="ECO:0000269" key="14">
    <source>
    </source>
</evidence>
<evidence type="ECO:0000269" key="15">
    <source>
    </source>
</evidence>
<evidence type="ECO:0000269" key="16">
    <source>
    </source>
</evidence>
<evidence type="ECO:0000269" key="17">
    <source>
    </source>
</evidence>
<evidence type="ECO:0000269" key="18">
    <source>
    </source>
</evidence>
<evidence type="ECO:0000269" key="19">
    <source>
    </source>
</evidence>
<evidence type="ECO:0000269" key="20">
    <source>
    </source>
</evidence>
<evidence type="ECO:0000269" key="21">
    <source>
    </source>
</evidence>
<evidence type="ECO:0000269" key="22">
    <source>
    </source>
</evidence>
<evidence type="ECO:0000269" key="23">
    <source>
    </source>
</evidence>
<evidence type="ECO:0000269" key="24">
    <source>
    </source>
</evidence>
<evidence type="ECO:0000269" key="25">
    <source>
    </source>
</evidence>
<evidence type="ECO:0000269" key="26">
    <source>
    </source>
</evidence>
<evidence type="ECO:0000269" key="27">
    <source>
    </source>
</evidence>
<evidence type="ECO:0000269" key="28">
    <source>
    </source>
</evidence>
<evidence type="ECO:0000269" key="29">
    <source>
    </source>
</evidence>
<evidence type="ECO:0000269" key="30">
    <source>
    </source>
</evidence>
<evidence type="ECO:0000303" key="31">
    <source>
    </source>
</evidence>
<evidence type="ECO:0000303" key="32">
    <source>
    </source>
</evidence>
<evidence type="ECO:0000303" key="33">
    <source>
    </source>
</evidence>
<evidence type="ECO:0000303" key="34">
    <source>
    </source>
</evidence>
<evidence type="ECO:0000305" key="35"/>
<evidence type="ECO:0000305" key="36">
    <source>
    </source>
</evidence>
<evidence type="ECO:0000305" key="37">
    <source>
    </source>
</evidence>
<evidence type="ECO:0000305" key="38">
    <source>
    </source>
</evidence>
<evidence type="ECO:0000305" key="39">
    <source>
    </source>
</evidence>
<evidence type="ECO:0000312" key="40">
    <source>
        <dbReference type="EMBL" id="BAC75827.1"/>
    </source>
</evidence>
<evidence type="ECO:0007744" key="41">
    <source>
        <dbReference type="PDB" id="1VCL"/>
    </source>
</evidence>
<evidence type="ECO:0007744" key="42">
    <source>
        <dbReference type="PDB" id="2Z48"/>
    </source>
</evidence>
<evidence type="ECO:0007744" key="43">
    <source>
        <dbReference type="PDB" id="2Z49"/>
    </source>
</evidence>
<evidence type="ECO:0007744" key="44">
    <source>
        <dbReference type="PDB" id="3W9T"/>
    </source>
</evidence>
<evidence type="ECO:0007829" key="45">
    <source>
        <dbReference type="PDB" id="1VCL"/>
    </source>
</evidence>
<feature type="propeptide" id="PRO_0000454468" description="Removed in mature form" evidence="4">
    <location>
        <begin position="1"/>
        <end position="10"/>
    </location>
</feature>
<feature type="chain" id="PRO_0000454469" description="Galactose/N-acetylgalactosamine-binding lectin CEL-III" evidence="36">
    <location>
        <begin position="11"/>
        <end position="442"/>
    </location>
</feature>
<feature type="domain" description="Ricin B-type lectin 1" evidence="1">
    <location>
        <begin position="28"/>
        <end position="102"/>
    </location>
</feature>
<feature type="domain" description="Ricin B-type lectin 2" evidence="1">
    <location>
        <begin position="115"/>
        <end position="245"/>
    </location>
</feature>
<feature type="domain" description="Ricin B-type lectin 3" evidence="1">
    <location>
        <begin position="261"/>
        <end position="293"/>
    </location>
</feature>
<feature type="region of interest" description="Has hemagglutinating activity towards rabbit erythrocytes, but no hemolytic activity towards them" evidence="15">
    <location>
        <begin position="11"/>
        <end position="304"/>
    </location>
</feature>
<feature type="region of interest" description="Has a strong tendency to self-associate leading to formation of oligomers" evidence="11">
    <location>
        <begin position="294"/>
        <end position="442"/>
    </location>
</feature>
<feature type="binding site" evidence="12 42">
    <location>
        <position position="19"/>
    </location>
    <ligand>
        <name>D-galactose</name>
        <dbReference type="ChEBI" id="CHEBI:4139"/>
    </ligand>
</feature>
<feature type="binding site" evidence="12 20 42 43 44">
    <location>
        <begin position="33"/>
        <end position="36"/>
    </location>
    <ligand>
        <name>D-galactose</name>
        <dbReference type="ChEBI" id="CHEBI:4139"/>
    </ligand>
</feature>
<feature type="binding site" evidence="10 12 20 41 42 43 44">
    <location>
        <position position="33"/>
    </location>
    <ligand>
        <name>Ca(2+)</name>
        <dbReference type="ChEBI" id="CHEBI:29108"/>
        <label>1</label>
    </ligand>
</feature>
<feature type="binding site" evidence="10 12 20 41 42 43 44">
    <location>
        <position position="34"/>
    </location>
    <ligand>
        <name>Ca(2+)</name>
        <dbReference type="ChEBI" id="CHEBI:29108"/>
        <label>1</label>
    </ligand>
</feature>
<feature type="binding site" evidence="10 12 20 41 42 43 44">
    <location>
        <position position="36"/>
    </location>
    <ligand>
        <name>Ca(2+)</name>
        <dbReference type="ChEBI" id="CHEBI:29108"/>
        <label>1</label>
    </ligand>
</feature>
<feature type="binding site" evidence="10 12 20 41 42 43 44">
    <location>
        <position position="42"/>
    </location>
    <ligand>
        <name>Mg(2+)</name>
        <dbReference type="ChEBI" id="CHEBI:18420"/>
        <label>1</label>
    </ligand>
</feature>
<feature type="binding site" evidence="10 12 20 41 42 43 44">
    <location>
        <position position="43"/>
    </location>
    <ligand>
        <name>Mg(2+)</name>
        <dbReference type="ChEBI" id="CHEBI:18420"/>
        <label>1</label>
    </ligand>
</feature>
<feature type="binding site" evidence="12 20 42 43 44">
    <location>
        <position position="49"/>
    </location>
    <ligand>
        <name>D-galactose</name>
        <dbReference type="ChEBI" id="CHEBI:4139"/>
    </ligand>
</feature>
<feature type="binding site" evidence="10 12 20 41 42 43 44">
    <location>
        <position position="53"/>
    </location>
    <ligand>
        <name>Ca(2+)</name>
        <dbReference type="ChEBI" id="CHEBI:29108"/>
        <label>1</label>
    </ligand>
</feature>
<feature type="binding site" evidence="10 12 20 41 42 43 44">
    <location>
        <position position="82"/>
    </location>
    <ligand>
        <name>Mg(2+)</name>
        <dbReference type="ChEBI" id="CHEBI:18420"/>
        <label>1</label>
    </ligand>
</feature>
<feature type="binding site" evidence="10 12 20 41 42 43 44">
    <location>
        <position position="83"/>
    </location>
    <ligand>
        <name>Mg(2+)</name>
        <dbReference type="ChEBI" id="CHEBI:18420"/>
        <label>1</label>
    </ligand>
</feature>
<feature type="binding site" evidence="12 42">
    <location>
        <position position="117"/>
    </location>
    <ligand>
        <name>D-galactose</name>
        <dbReference type="ChEBI" id="CHEBI:4139"/>
    </ligand>
</feature>
<feature type="binding site" evidence="12 20 43 44">
    <location>
        <begin position="131"/>
        <end position="134"/>
    </location>
    <ligand>
        <name>D-galactose</name>
        <dbReference type="ChEBI" id="CHEBI:4139"/>
    </ligand>
</feature>
<feature type="binding site" evidence="10 12 20 41 42 43 44">
    <location>
        <position position="131"/>
    </location>
    <ligand>
        <name>Ca(2+)</name>
        <dbReference type="ChEBI" id="CHEBI:29108"/>
        <label>2</label>
    </ligand>
</feature>
<feature type="binding site" evidence="10 12 20 41 42 43 44">
    <location>
        <position position="132"/>
    </location>
    <ligand>
        <name>Ca(2+)</name>
        <dbReference type="ChEBI" id="CHEBI:29108"/>
        <label>2</label>
    </ligand>
</feature>
<feature type="binding site" evidence="10 12 20 41 42 43 44">
    <location>
        <position position="134"/>
    </location>
    <ligand>
        <name>Ca(2+)</name>
        <dbReference type="ChEBI" id="CHEBI:29108"/>
        <label>2</label>
    </ligand>
</feature>
<feature type="binding site" evidence="10 12 20 41 42 43 44">
    <location>
        <position position="141"/>
    </location>
    <ligand>
        <name>Mg(2+)</name>
        <dbReference type="ChEBI" id="CHEBI:18420"/>
        <label>1</label>
    </ligand>
</feature>
<feature type="binding site" evidence="12 20 43 44">
    <location>
        <begin position="144"/>
        <end position="147"/>
    </location>
    <ligand>
        <name>D-galactose</name>
        <dbReference type="ChEBI" id="CHEBI:4139"/>
    </ligand>
</feature>
<feature type="binding site" evidence="10 12 20 41 42 43 44">
    <location>
        <position position="151"/>
    </location>
    <ligand>
        <name>Ca(2+)</name>
        <dbReference type="ChEBI" id="CHEBI:29108"/>
        <label>2</label>
    </ligand>
</feature>
<feature type="binding site" evidence="12 20 43 44">
    <location>
        <begin position="178"/>
        <end position="181"/>
    </location>
    <ligand>
        <name>D-galactose</name>
        <dbReference type="ChEBI" id="CHEBI:4139"/>
    </ligand>
</feature>
<feature type="binding site" evidence="10 12 20 41 42 43 44">
    <location>
        <position position="178"/>
    </location>
    <ligand>
        <name>Ca(2+)</name>
        <dbReference type="ChEBI" id="CHEBI:29108"/>
        <label>3</label>
    </ligand>
</feature>
<feature type="binding site" evidence="10 12 20 41 42 43 44">
    <location>
        <position position="179"/>
    </location>
    <ligand>
        <name>Ca(2+)</name>
        <dbReference type="ChEBI" id="CHEBI:29108"/>
        <label>3</label>
    </ligand>
</feature>
<feature type="binding site" evidence="10 12 20 41 42 43 44">
    <location>
        <position position="181"/>
    </location>
    <ligand>
        <name>Ca(2+)</name>
        <dbReference type="ChEBI" id="CHEBI:29108"/>
        <label>3</label>
    </ligand>
</feature>
<feature type="binding site" evidence="10 12 20 41 42 43 44">
    <location>
        <position position="187"/>
    </location>
    <ligand>
        <name>Mg(2+)</name>
        <dbReference type="ChEBI" id="CHEBI:18420"/>
        <label>2</label>
    </ligand>
</feature>
<feature type="binding site" evidence="10 12 20 41 42 43 44">
    <location>
        <position position="188"/>
    </location>
    <ligand>
        <name>Mg(2+)</name>
        <dbReference type="ChEBI" id="CHEBI:18420"/>
        <label>2</label>
    </ligand>
</feature>
<feature type="binding site" evidence="12 20 43 44">
    <location>
        <begin position="191"/>
        <end position="194"/>
    </location>
    <ligand>
        <name>D-galactose</name>
        <dbReference type="ChEBI" id="CHEBI:4139"/>
    </ligand>
</feature>
<feature type="binding site" evidence="10 12 20 41 42 43 44">
    <location>
        <position position="198"/>
    </location>
    <ligand>
        <name>Ca(2+)</name>
        <dbReference type="ChEBI" id="CHEBI:29108"/>
        <label>3</label>
    </ligand>
</feature>
<feature type="binding site" evidence="12 20 43 44">
    <location>
        <begin position="219"/>
        <end position="222"/>
    </location>
    <ligand>
        <name>D-galactose</name>
        <dbReference type="ChEBI" id="CHEBI:4139"/>
    </ligand>
</feature>
<feature type="binding site" evidence="10 12 20 41 42 43 44">
    <location>
        <position position="219"/>
    </location>
    <ligand>
        <name>Ca(2+)</name>
        <dbReference type="ChEBI" id="CHEBI:29108"/>
        <label>4</label>
    </ligand>
</feature>
<feature type="binding site" evidence="10 12 20 41 42 43 44">
    <location>
        <position position="220"/>
    </location>
    <ligand>
        <name>Ca(2+)</name>
        <dbReference type="ChEBI" id="CHEBI:29108"/>
        <label>4</label>
    </ligand>
</feature>
<feature type="binding site" evidence="10 12 20 41 42 43 44">
    <location>
        <position position="222"/>
    </location>
    <ligand>
        <name>Ca(2+)</name>
        <dbReference type="ChEBI" id="CHEBI:29108"/>
        <label>4</label>
    </ligand>
</feature>
<feature type="binding site" evidence="10 12 20 41 42 43 44">
    <location>
        <position position="228"/>
    </location>
    <ligand>
        <name>Mg(2+)</name>
        <dbReference type="ChEBI" id="CHEBI:18420"/>
        <label>2</label>
    </ligand>
</feature>
<feature type="binding site" evidence="10 12 20 41 42 43 44">
    <location>
        <position position="229"/>
    </location>
    <ligand>
        <name>Mg(2+)</name>
        <dbReference type="ChEBI" id="CHEBI:18420"/>
        <label>2</label>
    </ligand>
</feature>
<feature type="binding site" evidence="12 20 43 44">
    <location>
        <begin position="232"/>
        <end position="235"/>
    </location>
    <ligand>
        <name>D-galactose</name>
        <dbReference type="ChEBI" id="CHEBI:4139"/>
    </ligand>
</feature>
<feature type="binding site" evidence="10 12 20 41 42 43 44">
    <location>
        <position position="239"/>
    </location>
    <ligand>
        <name>Ca(2+)</name>
        <dbReference type="ChEBI" id="CHEBI:29108"/>
        <label>4</label>
    </ligand>
</feature>
<feature type="binding site" evidence="12 20 42 43 44">
    <location>
        <begin position="266"/>
        <end position="269"/>
    </location>
    <ligand>
        <name>D-galactose</name>
        <dbReference type="ChEBI" id="CHEBI:4139"/>
    </ligand>
</feature>
<feature type="binding site" evidence="10 12 20 41 42 43 44">
    <location>
        <position position="266"/>
    </location>
    <ligand>
        <name>Ca(2+)</name>
        <dbReference type="ChEBI" id="CHEBI:29108"/>
        <label>5</label>
    </ligand>
</feature>
<feature type="binding site" evidence="10 12 20 41 42 43 44">
    <location>
        <position position="267"/>
    </location>
    <ligand>
        <name>Ca(2+)</name>
        <dbReference type="ChEBI" id="CHEBI:29108"/>
        <label>5</label>
    </ligand>
</feature>
<feature type="binding site" evidence="10 12 20 41 42 43 44">
    <location>
        <position position="269"/>
    </location>
    <ligand>
        <name>Ca(2+)</name>
        <dbReference type="ChEBI" id="CHEBI:29108"/>
        <label>5</label>
    </ligand>
</feature>
<feature type="binding site" evidence="10 12 20 41 42 43 44">
    <location>
        <position position="275"/>
    </location>
    <ligand>
        <name>Mg(2+)</name>
        <dbReference type="ChEBI" id="CHEBI:18420"/>
        <label>2</label>
    </ligand>
</feature>
<feature type="binding site" evidence="10 12 20 41 42 43 44">
    <location>
        <position position="276"/>
    </location>
    <ligand>
        <name>Mg(2+)</name>
        <dbReference type="ChEBI" id="CHEBI:18420"/>
        <label>2</label>
    </ligand>
</feature>
<feature type="binding site" evidence="12 20 42 43 44">
    <location>
        <begin position="279"/>
        <end position="282"/>
    </location>
    <ligand>
        <name>D-galactose</name>
        <dbReference type="ChEBI" id="CHEBI:4139"/>
    </ligand>
</feature>
<feature type="binding site" evidence="10 12 20 41 42 43 44">
    <location>
        <position position="286"/>
    </location>
    <ligand>
        <name>Ca(2+)</name>
        <dbReference type="ChEBI" id="CHEBI:29108"/>
        <label>5</label>
    </ligand>
</feature>
<feature type="binding site" evidence="12 20 42 43 44">
    <location>
        <position position="286"/>
    </location>
    <ligand>
        <name>D-galactose</name>
        <dbReference type="ChEBI" id="CHEBI:4139"/>
    </ligand>
</feature>
<feature type="modified residue" description="Pyrrolidone carboxylic acid" evidence="4 10">
    <location>
        <position position="11"/>
    </location>
</feature>
<feature type="disulfide bond" evidence="10 12 20 41 42 43 44">
    <location>
        <begin position="14"/>
        <end position="59"/>
    </location>
</feature>
<feature type="disulfide bond" evidence="1 10 12 20 41 42 43 44">
    <location>
        <begin position="31"/>
        <end position="48"/>
    </location>
</feature>
<feature type="disulfide bond" evidence="1 10 12 20 41 42 43 44">
    <location>
        <begin position="72"/>
        <end position="88"/>
    </location>
</feature>
<feature type="disulfide bond" evidence="1 10 12 20 41 42 43 44">
    <location>
        <begin position="129"/>
        <end position="146"/>
    </location>
</feature>
<feature type="disulfide bond" evidence="1 10 12 20 41 42 43 44">
    <location>
        <begin position="176"/>
        <end position="193"/>
    </location>
</feature>
<feature type="disulfide bond" evidence="1 10 12 20 41 42 43 44">
    <location>
        <begin position="217"/>
        <end position="234"/>
    </location>
</feature>
<feature type="disulfide bond" evidence="10 12 20 41 42 43 44">
    <location>
        <begin position="249"/>
        <end position="254"/>
    </location>
</feature>
<feature type="disulfide bond" evidence="1 10 12 20 41 42 43 44">
    <location>
        <begin position="264"/>
        <end position="281"/>
    </location>
</feature>
<feature type="disulfide bond" evidence="10 12 20 41 42 43 44">
    <location>
        <begin position="308"/>
        <end position="390"/>
    </location>
</feature>
<feature type="disulfide bond" evidence="10 12 20 41 42 43 44">
    <location>
        <begin position="377"/>
        <end position="416"/>
    </location>
</feature>
<feature type="disulfide bond" evidence="10 12 20 41 42 43 44">
    <location>
        <begin position="425"/>
        <end position="439"/>
    </location>
</feature>
<feature type="disulfide bond" evidence="10 12 20 41 42 43 44">
    <location>
        <begin position="431"/>
        <end position="436"/>
    </location>
</feature>
<feature type="mutagenesis site" description="Weak N-acetylgalactosamine binding." evidence="12">
    <original>Y</original>
    <variation>A</variation>
    <location>
        <position position="26"/>
    </location>
</feature>
<feature type="mutagenesis site" description="Loss of N-acetylgalactosamine binding." evidence="12">
    <original>D</original>
    <variation>A</variation>
    <location>
        <position position="33"/>
    </location>
</feature>
<feature type="mutagenesis site" description="Loss of N-acetylgalactosamine binding." evidence="12">
    <original>D</original>
    <variation>A</variation>
    <location>
        <position position="53"/>
    </location>
</feature>
<feature type="mutagenesis site" description="Loss of N-acetylgalactosamine binding." evidence="12">
    <original>Q</original>
    <variation>A</variation>
    <location>
        <position position="54"/>
    </location>
</feature>
<feature type="mutagenesis site" description="Strongly decreased hemolytic activity compared to the wild-type protein. No effect on N-acetylgalactosamine binding." evidence="12 19">
    <original>Q</original>
    <variation>A</variation>
    <location>
        <position position="55"/>
    </location>
</feature>
<feature type="mutagenesis site" description="No effect on lactose binding." evidence="19">
    <original>S</original>
    <variation>A</variation>
    <location>
        <position position="315"/>
    </location>
</feature>
<feature type="mutagenesis site" description="No effect on lactose binding." evidence="19">
    <original>S</original>
    <variation>A</variation>
    <location>
        <position position="325"/>
    </location>
</feature>
<feature type="mutagenesis site" description="Alterations in oligomer formation and in hemolytic activity; when associated with A-334 and A-336. Alterations in oligomer formation and hemolytic activity; when associated with A-334; A-336; A-351; A-353 and A-355." evidence="11 14">
    <original>V</original>
    <variation>A</variation>
    <location>
        <position position="332"/>
    </location>
</feature>
<feature type="mutagenesis site" description="Alterations in oligomer formation and in hemolytic activity; when associated with A-332 and A-336. Alterations in oligomer formation and in hemolytic activity; when associated with A-332; A-336; A-351; A-353 and A-355." evidence="11 14">
    <original>V</original>
    <variation>A</variation>
    <location>
        <position position="334"/>
    </location>
</feature>
<feature type="mutagenesis site" description="Alterations in oligomer formation and in hemolytic activity; when associated with A-332 and A-334. Alterations in oligomer formation and in hemolytic activity; when associated with A-332; A-334; A-351; A-353 and A-355." evidence="11 14">
    <original>V</original>
    <variation>A</variation>
    <location>
        <position position="336"/>
    </location>
</feature>
<feature type="mutagenesis site" description="No effect on oligomerization. No effect on lactose binding." evidence="19">
    <original>I</original>
    <variation>A</variation>
    <location>
        <position position="340"/>
    </location>
</feature>
<feature type="mutagenesis site" description="No effect on lactose binding. Decreased antibacterial activity toward Gram-positive bacteria S.aureus IFO 12732." evidence="9 19">
    <original>K</original>
    <variation>A</variation>
    <location>
        <position position="342"/>
    </location>
</feature>
<feature type="mutagenesis site" description="Increased antibacterial activity toward Gram-positive bacteria S.aureus IFO 12732 and increased permeability of the S.aureus cell membrane; when associated with R-348; R-354 and R-361." evidence="9">
    <original>K</original>
    <variation>R</variation>
    <location>
        <position position="342"/>
    </location>
</feature>
<feature type="mutagenesis site" description="Increased antibacterial activity toward Gram-negative bacteria E.coli ATCC 43827 and P.aeruginosa ATCC 27853, and toward Gram-positive bacteria S.aureus IFO 12732 and B.subtilis IFO 3134 including increased permeability of the S.aureus cell membrane; when associated with L-351; L-353 and L-355." evidence="9">
    <original>V</original>
    <variation>L</variation>
    <location>
        <position position="344"/>
    </location>
</feature>
<feature type="mutagenesis site" description="Partial oligomerization. No effect on lactose binding." evidence="19">
    <original>I</original>
    <variation>A</variation>
    <location>
        <position position="345"/>
    </location>
</feature>
<feature type="mutagenesis site" description="Decreased antibacterial activity toward Gram-positive bacteria S.aureus IFO 12732. Markedly decreased hemolytic activity compared to the wild-type protein. No effect on lactose binding." evidence="9 19">
    <original>K</original>
    <variation>A</variation>
    <location>
        <position position="348"/>
    </location>
</feature>
<feature type="mutagenesis site" description="Increased antibacterial activity toward Gram-positive bacteria S.aureus IFO 12732 and increased permeability of the S.aureus cell membrane; when associated with R-342; R-354 and R-361." evidence="9">
    <original>K</original>
    <variation>R</variation>
    <location>
        <position position="348"/>
    </location>
</feature>
<feature type="mutagenesis site" description="No effect on lactose binding." evidence="19">
    <original>S</original>
    <variation>A</variation>
    <location>
        <position position="350"/>
    </location>
</feature>
<feature type="mutagenesis site" description="Alterations in oligomer formation and in hemolytic activity; when associated with A-332; A-334; A-336; A-353 and A-355. Alterations in oligomer formation and in hemolytic activity; when associated with A-353 and A-355." evidence="11 14">
    <original>V</original>
    <variation>A</variation>
    <location>
        <position position="351"/>
    </location>
</feature>
<feature type="mutagenesis site" description="Increased antibacterial activity toward Gram-negative bacteria E.coli ATCC 43827 and P.aeruginosa ATCC 27853, and toward Gram-positive bacteria S.aureus IFO 12732 and B.subtilis IFO 3134 including increased permeability of the S.aureus cell membrane; when associated with L-344; L-353 and L-355." evidence="9">
    <original>V</original>
    <variation>L</variation>
    <location>
        <position position="351"/>
    </location>
</feature>
<feature type="mutagenesis site" description="Alterations in oligomer formation and in hemolytic activity; when associated with A-332; A-334; A-336; A-351 and A-355. Alterations in oligomer formation and in hemolytic activity; when associated with A-351 and A-355." evidence="11 14">
    <original>V</original>
    <variation>A</variation>
    <location>
        <position position="353"/>
    </location>
</feature>
<feature type="mutagenesis site" description="Increased antibacterial activity toward Gram-negative bacteria E.coli ATCC 43827 and P.aeruginosa ATCC 27853, and toward Gram-positive bacteria S.aureus IFO 12732 and B.subtilis IFO 3134 including increased permeability of the S.aureus cell membrane; when associated with L-344; L-351 and L-355." evidence="9">
    <original>V</original>
    <variation>L</variation>
    <location>
        <position position="353"/>
    </location>
</feature>
<feature type="mutagenesis site" description="Decreased antibacterial activity toward Gram-positive bacteria S.aureus IFO 12732. Markedly increased hemolytic activity compared to the wild-type protein. No effect on lactose binding." evidence="9 19">
    <original>K</original>
    <variation>A</variation>
    <location>
        <position position="354"/>
    </location>
</feature>
<feature type="mutagenesis site" description="Increased antibacterial activity toward Gram-positive bacteria S.aureus IFO 12732 and increased permeability of the S.aureus cell membrane; when associated with R-342; R-348 and R-361." evidence="9">
    <original>K</original>
    <variation>R</variation>
    <location>
        <position position="354"/>
    </location>
</feature>
<feature type="mutagenesis site" description="No effect on lactose binding. Alterations in oligomer formation and in hemolytic activity; when associated with A-332; A-334; A-336; A-351 and A-353. Alterations in oligomer formation and in hemolytic activity; when associated with A-351 and A-353." evidence="11 14 19">
    <original>V</original>
    <variation>A</variation>
    <location>
        <position position="355"/>
    </location>
</feature>
<feature type="mutagenesis site" description="Increased antibacterial activity toward Gram-negative bacteria E.coli ATCC 43827 and P.aeruginosa ATCC 27853, and toward Gram-positive bacteria S.aureus IFO 12732 and B.subtilis IFO 3134 including increased permeability of the S.aureus cell membrane; when associated with L-344; L-351 and L-353." evidence="9">
    <original>V</original>
    <variation>L</variation>
    <location>
        <position position="355"/>
    </location>
</feature>
<feature type="mutagenesis site" description="No effect on lactose binding." evidence="19">
    <original>S</original>
    <variation>A</variation>
    <location>
        <position position="360"/>
    </location>
</feature>
<feature type="mutagenesis site" description="Decreased antibacterial activity toward Gram-positive bacteria S.aureus IFO 12732. Markedly increased hemolytic activity compared to the wild-type protein. No effect on lactose binding." evidence="9 18 19">
    <original>K</original>
    <variation>A</variation>
    <location>
        <position position="361"/>
    </location>
</feature>
<feature type="mutagenesis site" description="Increased antibacterial activity toward Gram-positive bacteria S.aureus IFO 12732 and increased permeability of the S.aureus cell membrane; when associated with R-342; R-348 and R-354." evidence="9">
    <original>K</original>
    <variation>R</variation>
    <location>
        <position position="361"/>
    </location>
</feature>
<feature type="mutagenesis site" description="No effect on lactose binding." evidence="19">
    <original>N</original>
    <variation>A</variation>
    <location>
        <position position="365"/>
    </location>
</feature>
<feature type="mutagenesis site" description="No effect on lactose binding." evidence="19">
    <original>Y</original>
    <variation>A</variation>
    <location>
        <position position="375"/>
    </location>
</feature>
<feature type="mutagenesis site" description="Alterations in hemolytic activity compared to the wild-type protein. No effect on lactose binding." evidence="19 21">
    <original>D</original>
    <variation>A</variation>
    <location>
        <position position="381"/>
    </location>
</feature>
<feature type="mutagenesis site" description="Almost no hemolytic activity." evidence="21">
    <original>D</original>
    <variation>K</variation>
    <location>
        <position position="381"/>
    </location>
</feature>
<feature type="mutagenesis site" description="20% of the hemolytic activity of that of the wild-type protein." evidence="21">
    <original>D</original>
    <variation>R</variation>
    <location>
        <position position="381"/>
    </location>
</feature>
<feature type="mutagenesis site" description="No effect on lactose binding." evidence="19">
    <original>E</original>
    <variation>A</variation>
    <location>
        <position position="385"/>
    </location>
</feature>
<feature type="mutagenesis site" description="Strongly decreased hemolytic activity compared to the wild-type protein. No effect on lactose binding." evidence="19">
    <original>R</original>
    <variation>A</variation>
    <location>
        <position position="388"/>
    </location>
</feature>
<feature type="mutagenesis site" description="No effect on lactose binding." evidence="19">
    <original>D</original>
    <variation>A</variation>
    <location>
        <position position="405"/>
    </location>
</feature>
<feature type="mutagenesis site" description="No effect on oligomerization. No effect on lactose binding." evidence="19">
    <original>L</original>
    <variation>A</variation>
    <location>
        <position position="407"/>
    </location>
</feature>
<feature type="mutagenesis site" description="No effect on oligomerization. No effect on lactose binding." evidence="19">
    <original>I</original>
    <variation>A</variation>
    <location>
        <position position="413"/>
    </location>
</feature>
<feature type="mutagenesis site" description="3.6-fold higher hemolytic activity compared to the wild-type protein. No effect on oligomerization. No effect on lactose binding." evidence="19 21">
    <original>K</original>
    <variation>A</variation>
    <location>
        <position position="415"/>
    </location>
</feature>
<feature type="mutagenesis site" description="Markedly decreased hemolytic activity compared to the wild-type protein. No effect on lactose binding." evidence="21">
    <original>K</original>
    <variation>E</variation>
    <location>
        <position position="415"/>
    </location>
</feature>
<feature type="mutagenesis site" description="Autoaggregates and cannot be refolded to a soluble form." evidence="21">
    <original>K</original>
    <variation>L</variation>
    <location>
        <position position="415"/>
    </location>
</feature>
<feature type="mutagenesis site" description="Markedly decreased hemolytic activity compared to the wild-type protein. No effect on lactose binding." evidence="21">
    <original>K</original>
    <variation>R</variation>
    <location>
        <position position="415"/>
    </location>
</feature>
<feature type="mutagenesis site" description="Markedly increased hemolytic activity compared to the wild-type protein. No effect on lactose binding." evidence="21">
    <original>K</original>
    <variation>S</variation>
    <location>
        <position position="415"/>
    </location>
</feature>
<feature type="mutagenesis site" description="Markedly decreased hemolytic activity compared to the wild-type protein. No effect on lactose binding." evidence="19">
    <original>R</original>
    <variation>A</variation>
    <location>
        <position position="418"/>
    </location>
</feature>
<feature type="mutagenesis site" description="Markedly increased hemolytic activity compared to the wild-type protein. No effect on lactose binding." evidence="19">
    <original>K</original>
    <variation>A</variation>
    <location>
        <position position="430"/>
    </location>
</feature>
<feature type="mutagenesis site" description="Markedly increased hemolytic activity compared to the wild-type protein. No effect on lactose binding." evidence="19">
    <original>D</original>
    <variation>A</variation>
    <location>
        <position position="435"/>
    </location>
</feature>
<feature type="sequence conflict" description="In Ref. 1; AA sequence." evidence="35" ref="1">
    <original>A</original>
    <variation>T</variation>
    <location>
        <position position="107"/>
    </location>
</feature>
<feature type="sequence conflict" description="In Ref. 1; AA sequence." evidence="35" ref="1">
    <original>I</original>
    <variation>V</variation>
    <location>
        <position position="156"/>
    </location>
</feature>
<feature type="strand" evidence="45">
    <location>
        <begin position="16"/>
        <end position="21"/>
    </location>
</feature>
<feature type="strand" evidence="45">
    <location>
        <begin position="23"/>
        <end position="25"/>
    </location>
</feature>
<feature type="turn" evidence="45">
    <location>
        <begin position="26"/>
        <end position="28"/>
    </location>
</feature>
<feature type="strand" evidence="45">
    <location>
        <begin position="31"/>
        <end position="39"/>
    </location>
</feature>
<feature type="strand" evidence="45">
    <location>
        <begin position="41"/>
        <end position="46"/>
    </location>
</feature>
<feature type="helix" evidence="45">
    <location>
        <begin position="52"/>
        <end position="54"/>
    </location>
</feature>
<feature type="strand" evidence="45">
    <location>
        <begin position="55"/>
        <end position="59"/>
    </location>
</feature>
<feature type="strand" evidence="45">
    <location>
        <begin position="64"/>
        <end position="87"/>
    </location>
</feature>
<feature type="strand" evidence="45">
    <location>
        <begin position="91"/>
        <end position="93"/>
    </location>
</feature>
<feature type="helix" evidence="45">
    <location>
        <begin position="96"/>
        <end position="98"/>
    </location>
</feature>
<feature type="strand" evidence="45">
    <location>
        <begin position="100"/>
        <end position="109"/>
    </location>
</feature>
<feature type="strand" evidence="45">
    <location>
        <begin position="115"/>
        <end position="123"/>
    </location>
</feature>
<feature type="turn" evidence="45">
    <location>
        <begin position="124"/>
        <end position="126"/>
    </location>
</feature>
<feature type="strand" evidence="45">
    <location>
        <begin position="129"/>
        <end position="137"/>
    </location>
</feature>
<feature type="strand" evidence="45">
    <location>
        <begin position="139"/>
        <end position="144"/>
    </location>
</feature>
<feature type="helix" evidence="45">
    <location>
        <begin position="150"/>
        <end position="152"/>
    </location>
</feature>
<feature type="strand" evidence="45">
    <location>
        <begin position="154"/>
        <end position="156"/>
    </location>
</feature>
<feature type="strand" evidence="45">
    <location>
        <begin position="162"/>
        <end position="170"/>
    </location>
</feature>
<feature type="turn" evidence="45">
    <location>
        <begin position="171"/>
        <end position="173"/>
    </location>
</feature>
<feature type="strand" evidence="45">
    <location>
        <begin position="176"/>
        <end position="184"/>
    </location>
</feature>
<feature type="strand" evidence="45">
    <location>
        <begin position="186"/>
        <end position="191"/>
    </location>
</feature>
<feature type="helix" evidence="45">
    <location>
        <begin position="197"/>
        <end position="199"/>
    </location>
</feature>
<feature type="strand" evidence="45">
    <location>
        <begin position="201"/>
        <end position="204"/>
    </location>
</feature>
<feature type="strand" evidence="45">
    <location>
        <begin position="209"/>
        <end position="211"/>
    </location>
</feature>
<feature type="turn" evidence="45">
    <location>
        <begin position="212"/>
        <end position="214"/>
    </location>
</feature>
<feature type="strand" evidence="45">
    <location>
        <begin position="217"/>
        <end position="225"/>
    </location>
</feature>
<feature type="strand" evidence="45">
    <location>
        <begin position="227"/>
        <end position="232"/>
    </location>
</feature>
<feature type="helix" evidence="45">
    <location>
        <begin position="238"/>
        <end position="240"/>
    </location>
</feature>
<feature type="helix" evidence="45">
    <location>
        <begin position="246"/>
        <end position="248"/>
    </location>
</feature>
<feature type="turn" evidence="45">
    <location>
        <begin position="259"/>
        <end position="261"/>
    </location>
</feature>
<feature type="strand" evidence="45">
    <location>
        <begin position="264"/>
        <end position="272"/>
    </location>
</feature>
<feature type="strand" evidence="45">
    <location>
        <begin position="274"/>
        <end position="279"/>
    </location>
</feature>
<feature type="helix" evidence="45">
    <location>
        <begin position="285"/>
        <end position="287"/>
    </location>
</feature>
<feature type="strand" evidence="45">
    <location>
        <begin position="289"/>
        <end position="292"/>
    </location>
</feature>
<feature type="strand" evidence="45">
    <location>
        <begin position="300"/>
        <end position="309"/>
    </location>
</feature>
<feature type="strand" evidence="45">
    <location>
        <begin position="315"/>
        <end position="318"/>
    </location>
</feature>
<feature type="strand" evidence="45">
    <location>
        <begin position="321"/>
        <end position="323"/>
    </location>
</feature>
<feature type="helix" evidence="45">
    <location>
        <begin position="330"/>
        <end position="342"/>
    </location>
</feature>
<feature type="helix" evidence="45">
    <location>
        <begin position="353"/>
        <end position="364"/>
    </location>
</feature>
<feature type="strand" evidence="45">
    <location>
        <begin position="373"/>
        <end position="376"/>
    </location>
</feature>
<feature type="strand" evidence="45">
    <location>
        <begin position="383"/>
        <end position="385"/>
    </location>
</feature>
<feature type="strand" evidence="45">
    <location>
        <begin position="387"/>
        <end position="400"/>
    </location>
</feature>
<feature type="turn" evidence="45">
    <location>
        <begin position="401"/>
        <end position="404"/>
    </location>
</feature>
<feature type="strand" evidence="45">
    <location>
        <begin position="405"/>
        <end position="410"/>
    </location>
</feature>
<feature type="strand" evidence="45">
    <location>
        <begin position="414"/>
        <end position="418"/>
    </location>
</feature>
<feature type="strand" evidence="45">
    <location>
        <begin position="429"/>
        <end position="433"/>
    </location>
</feature>
<feature type="strand" evidence="45">
    <location>
        <begin position="438"/>
        <end position="440"/>
    </location>
</feature>
<proteinExistence type="evidence at protein level"/>
<dbReference type="EMBL" id="AB109017">
    <property type="protein sequence ID" value="BAC75827.1"/>
    <property type="molecule type" value="mRNA"/>
</dbReference>
<dbReference type="PDB" id="1VCL">
    <property type="method" value="X-ray"/>
    <property type="resolution" value="1.70 A"/>
    <property type="chains" value="A/B=11-442"/>
</dbReference>
<dbReference type="PDB" id="2Z48">
    <property type="method" value="X-ray"/>
    <property type="resolution" value="1.70 A"/>
    <property type="chains" value="A/B=11-442"/>
</dbReference>
<dbReference type="PDB" id="2Z49">
    <property type="method" value="X-ray"/>
    <property type="resolution" value="1.95 A"/>
    <property type="chains" value="A/B=11-442"/>
</dbReference>
<dbReference type="PDB" id="3W9T">
    <property type="method" value="X-ray"/>
    <property type="resolution" value="2.90 A"/>
    <property type="chains" value="A/B/C/D/E/F/G=11-442"/>
</dbReference>
<dbReference type="PDBsum" id="1VCL"/>
<dbReference type="PDBsum" id="2Z48"/>
<dbReference type="PDBsum" id="2Z49"/>
<dbReference type="PDBsum" id="3W9T"/>
<dbReference type="SMR" id="Q868M7"/>
<dbReference type="CAZy" id="CBM13">
    <property type="family name" value="Carbohydrate-Binding Module Family 13"/>
</dbReference>
<dbReference type="TCDB" id="1.C.96.1.1">
    <property type="family name" value="the haemolytic lectin, cel-iii (cel-iii) family"/>
</dbReference>
<dbReference type="UniLectin" id="Q868M7"/>
<dbReference type="EvolutionaryTrace" id="Q868M7"/>
<dbReference type="GO" id="GO:0005615">
    <property type="term" value="C:extracellular space"/>
    <property type="evidence" value="ECO:0000314"/>
    <property type="project" value="UniProtKB"/>
</dbReference>
<dbReference type="GO" id="GO:0005794">
    <property type="term" value="C:Golgi apparatus"/>
    <property type="evidence" value="ECO:0007669"/>
    <property type="project" value="TreeGrafter"/>
</dbReference>
<dbReference type="GO" id="GO:0005509">
    <property type="term" value="F:calcium ion binding"/>
    <property type="evidence" value="ECO:0000314"/>
    <property type="project" value="UniProtKB"/>
</dbReference>
<dbReference type="GO" id="GO:0042806">
    <property type="term" value="F:fucose binding"/>
    <property type="evidence" value="ECO:0000314"/>
    <property type="project" value="UniProtKB"/>
</dbReference>
<dbReference type="GO" id="GO:0005534">
    <property type="term" value="F:galactose binding"/>
    <property type="evidence" value="ECO:0000314"/>
    <property type="project" value="UniProtKB"/>
</dbReference>
<dbReference type="GO" id="GO:0030395">
    <property type="term" value="F:lactose binding"/>
    <property type="evidence" value="ECO:0000314"/>
    <property type="project" value="UniProtKB"/>
</dbReference>
<dbReference type="GO" id="GO:0000287">
    <property type="term" value="F:magnesium ion binding"/>
    <property type="evidence" value="ECO:0000314"/>
    <property type="project" value="UniProtKB"/>
</dbReference>
<dbReference type="GO" id="GO:1903777">
    <property type="term" value="F:melibiose binding"/>
    <property type="evidence" value="ECO:0000314"/>
    <property type="project" value="UniProtKB"/>
</dbReference>
<dbReference type="GO" id="GO:0046871">
    <property type="term" value="F:N-acetylgalactosamine binding"/>
    <property type="evidence" value="ECO:0000314"/>
    <property type="project" value="UniProtKB"/>
</dbReference>
<dbReference type="GO" id="GO:0004653">
    <property type="term" value="F:polypeptide N-acetylgalactosaminyltransferase activity"/>
    <property type="evidence" value="ECO:0007669"/>
    <property type="project" value="TreeGrafter"/>
</dbReference>
<dbReference type="GO" id="GO:0019731">
    <property type="term" value="P:antibacterial humoral response"/>
    <property type="evidence" value="ECO:0000314"/>
    <property type="project" value="UniProtKB"/>
</dbReference>
<dbReference type="GO" id="GO:0001906">
    <property type="term" value="P:cell killing"/>
    <property type="evidence" value="ECO:0000314"/>
    <property type="project" value="UniProtKB"/>
</dbReference>
<dbReference type="GO" id="GO:0050829">
    <property type="term" value="P:defense response to Gram-negative bacterium"/>
    <property type="evidence" value="ECO:0000314"/>
    <property type="project" value="UniProtKB"/>
</dbReference>
<dbReference type="GO" id="GO:0050830">
    <property type="term" value="P:defense response to Gram-positive bacterium"/>
    <property type="evidence" value="ECO:0000314"/>
    <property type="project" value="UniProtKB"/>
</dbReference>
<dbReference type="GO" id="GO:0051673">
    <property type="term" value="P:disruption of plasma membrane integrity in another organism"/>
    <property type="evidence" value="ECO:0000314"/>
    <property type="project" value="UniProtKB"/>
</dbReference>
<dbReference type="GO" id="GO:0044179">
    <property type="term" value="P:hemolysis in another organism"/>
    <property type="evidence" value="ECO:0000314"/>
    <property type="project" value="UniProtKB"/>
</dbReference>
<dbReference type="GO" id="GO:0034120">
    <property type="term" value="P:positive regulation of erythrocyte aggregation"/>
    <property type="evidence" value="ECO:0000314"/>
    <property type="project" value="UniProtKB"/>
</dbReference>
<dbReference type="GO" id="GO:0051260">
    <property type="term" value="P:protein homooligomerization"/>
    <property type="evidence" value="ECO:0000314"/>
    <property type="project" value="UniProtKB"/>
</dbReference>
<dbReference type="GO" id="GO:0006493">
    <property type="term" value="P:protein O-linked glycosylation"/>
    <property type="evidence" value="ECO:0007669"/>
    <property type="project" value="TreeGrafter"/>
</dbReference>
<dbReference type="CDD" id="cd23420">
    <property type="entry name" value="beta-trefoil_Ricin_CELIII-like_rpt2"/>
    <property type="match status" value="1"/>
</dbReference>
<dbReference type="CDD" id="cd20214">
    <property type="entry name" value="PFM_CEL-III-like"/>
    <property type="match status" value="1"/>
</dbReference>
<dbReference type="Gene3D" id="2.80.10.50">
    <property type="match status" value="2"/>
</dbReference>
<dbReference type="Gene3D" id="3.30.1750.10">
    <property type="entry name" value="Hemolytic lectin CEL-III, C-terminal domain"/>
    <property type="match status" value="1"/>
</dbReference>
<dbReference type="InterPro" id="IPR028988">
    <property type="entry name" value="CEL-III_C_sf"/>
</dbReference>
<dbReference type="InterPro" id="IPR035992">
    <property type="entry name" value="Ricin_B-like_lectins"/>
</dbReference>
<dbReference type="InterPro" id="IPR000772">
    <property type="entry name" value="Ricin_B_lectin"/>
</dbReference>
<dbReference type="PANTHER" id="PTHR11675">
    <property type="entry name" value="N-ACETYLGALACTOSAMINYLTRANSFERASE"/>
    <property type="match status" value="1"/>
</dbReference>
<dbReference type="PANTHER" id="PTHR11675:SF126">
    <property type="entry name" value="RICIN B LECTIN DOMAIN-CONTAINING PROTEIN"/>
    <property type="match status" value="1"/>
</dbReference>
<dbReference type="Pfam" id="PF00652">
    <property type="entry name" value="Ricin_B_lectin"/>
    <property type="match status" value="2"/>
</dbReference>
<dbReference type="SMART" id="SM00458">
    <property type="entry name" value="RICIN"/>
    <property type="match status" value="2"/>
</dbReference>
<dbReference type="SUPFAM" id="SSF111265">
    <property type="entry name" value="Hemolytic lectin CEL-III, C-terminal domain"/>
    <property type="match status" value="1"/>
</dbReference>
<dbReference type="SUPFAM" id="SSF50370">
    <property type="entry name" value="Ricin B-like lectins"/>
    <property type="match status" value="2"/>
</dbReference>
<dbReference type="PROSITE" id="PS50231">
    <property type="entry name" value="RICIN_B_LECTIN"/>
    <property type="match status" value="3"/>
</dbReference>
<comment type="function">
    <text evidence="2 3 5 6 7 8 10 12 13 14 15 16 17 18 19 20 21 22 23 24 25 26 27 28 29 30">Galactose/N-acetylgalactosamine (Gal/GalNAc)-binding lectin with hemolytic activity. Favors saccharides that have a beta-1,4 linkage at the non-reducing end rather than saccharides having alpha-1,6 or alpha-1,4 linkages. Binds lactose, lactulose, GalNAc, galactosamine, methyl alpha-galactopyranoside, methyl beta-galactopyranoside, N-acetyllactosamine, p-nitrophenyl beta-D-galactopyranoside (pNP-Gal), p-nitrophenyl N-acetyl-beta-D-galactosaminide (pNP-GalNAc), asialofetuin, and human erythrocyte membrane lipids lactosyl ceramide (LacCer) and globoside globotetraosylceramide (Gb4Cer). Binds moderately to galactose, melibiose, raffinose, fucose, methyl alpha-galactoside and methyl beta-galactoside. Binds weakly to glucose, mannose and N-acetylglucosamine (GlcNAc) (PubMed:10101284, PubMed:10478454, PubMed:10923802, PubMed:11471734, PubMed:11983084, PubMed:14561725, PubMed:15194688, PubMed:17977832, PubMed:18159942, PubMed:19356139, PubMed:19420692, PubMed:22313748, PubMed:23470749, PubMed:23545649, PubMed:23583369, PubMed:24652284, PubMed:27101707, PubMed:7798179, PubMed:7876091, PubMed:8663224, PubMed:9058193, PubMed:9133626, PubMed:9305736, PubMed:9692203, PubMed:9805377, PubMed:9990124). Has hemolytic activity towards human (A, B and O-type), rabbit and rat erythrocytes, but not towards mouse, chicken or horse erythrocytes (PubMed:10101284, PubMed:10923802, PubMed:11471734, PubMed:18159942, PubMed:19356139, PubMed:19420692, PubMed:22313748, PubMed:23583369, PubMed:27101707, PubMed:7798179, PubMed:7876091, PubMed:8663224, PubMed:9058193, PubMed:9692203, PubMed:9805377). Forms ion-permeable transmembrane pores in the erythrocyte membrane as well as in artificial liposomes containing human erythrocyte membrane lipids LacCer, Gb4Cer and galactosyl ceramide (GalCer) leading to destruction of the membrane (PubMed:10478454, PubMed:7876091, PubMed:9133626, PubMed:9990124). Has hemagglutinating activity towards rabbit, human and rat erythrocytes, and at relatively high concentrations towards chicken and horse erythrocytes, but not towards mouse erythrocytes (PubMed:10923802, PubMed:11471734, PubMed:14561725, PubMed:18159942, PubMed:19420692, PubMed:7798179, PubMed:9692203, PubMed:9805377, PubMed:9990124). Has dose-dependent cytotoxic effect on Madin-Darby canine kidney (MDCK), African green monkey kidney (Vero) and human epithelia carcinoma (HeLa) cell lines, but Chinese hamster ovary (CHO), rat sarcoma (XC) and potoroo rat kangaroo kidney (PtK1) cells are highly resistant to the cytotoxic effect of this protein (PubMed:10101284, PubMed:9133626). Impairs malaria parasite development in malaria parasite infected transgenic A.stephensi mosquitoes expressing this protein specifically in their midguts. Binds to ookinetes and leads to strong dose-dependent inhibition of ookinete formation in vitro. Leads to severely impaired oocyst formation and significantly reduced sporozoite production of rodent malaria parasite P.berghei in the salivary glands of the transgenic mosquitoes. The parasite transmission to uninfected mice (vectorial competence) of these mosquitoes is significantly impaired. Also leads to severely impaired oocyst formation of human malaria parasite P.falciparum in transgenic mosquitoes fed on mature P.falciparum gametocyte cultures (PubMed:18159942). May be involved in defense mechanisms acting as a toxic protein to foreign microorganisms (PubMed:7876091, PubMed:9133626). May act in defense against predators (PubMed:24652284).</text>
</comment>
<comment type="cofactor">
    <cofactor evidence="6 10 12 15 20 22 25">
        <name>Ca(2+)</name>
        <dbReference type="ChEBI" id="CHEBI:29108"/>
    </cofactor>
    <text evidence="10 12 20">Binds 5 calcium ions per subunit.</text>
</comment>
<comment type="cofactor">
    <cofactor evidence="10 12 20">
        <name>Mg(2+)</name>
        <dbReference type="ChEBI" id="CHEBI:18420"/>
    </cofactor>
    <text evidence="10 12 20">Binds 2 magnesium ions per subunit. Magnesium is probably occupied in place of calcium as excess magnesium is used in the experiments.</text>
</comment>
<comment type="activity regulation">
    <text evidence="3 6 15 22 23 25 26">Ca(2+) is required for hemolytic activity and the activity increases with increasing calcium concentration. Hemolytic activity is inhibited by N-acetylgalactosamine (GalNAc), lactose, lactulose, galactosamine, dextran with molecular masses greater than 4 kDa, to a lesser extent by inulin and only slightly by sucrose and melezitose, but not by glucose or mannose. The activity is abolished in the presence of 10 mM EDTA (PubMed:11471734, PubMed:19420692, PubMed:7798179, PubMed:7876091, PubMed:9058193). Lactose-binding increases with increasing calcium concentration, but calcium has no effect on hemagglutinating activity (PubMed:11471734, PubMed:9058193). Cytotoxic effect on Madin-Darby canine kidney (MDCK) cell line is strongly inhibited by galactose, lactose and N-acetylgalactosamine (GalNAc), but not by raffinose, N-acetylglucosamine (GlcNAc), glucose, mannose, ribose or sucrose (PubMed:9133626). Pore formation in artificial lactosyl ceramide (LacCer) or globotetraosylceramide (Gb4Cer) containing liposomes is strongly inhibited by lactose (PubMed:10478454).</text>
</comment>
<comment type="biophysicochemical properties">
    <phDependence>
        <text evidence="2 3 23 24 25 26 29">Optimum pH for hemolytic activity is 10. Hemolytic activity increases with increasing pH from pH 7 to pH 10, but almost no hemolytic activity is observed below pH 6.5 (PubMed:7876091, PubMed:8663224). Binds to lactose between pH 4-10 (PubMed:9058193, PubMed:9805377). Pore formation in artificial liposomes containing human erythrocyte membrane lipids lactosyl ceramide (LacCer) or globotetraosylceramide (Gb4Cer) increases with increasing pH (PubMed:10478454). Cytotoxic effect on Madin-Darby canine kidney (MDCK) cell line increases with increasing pH with maximal cytotoxicity at pH 10 at 4 degrees Celsius, but no significant pH effect is observed at 37 degrees Celsius (PubMed:10101284, PubMed:9133626).</text>
    </phDependence>
    <temperatureDependence>
        <text evidence="23 25 26 30">Optimum temperature for hemolytic activity is 10 degrees Celsius. Hemolytic activity decreases markedly with increasing temperature (PubMed:7876091). Binds to lactose between 5-40 degrees Celsius, with maximal binding around 10 degrees Celsius (PubMed:9058193). Pore formation in artificial liposomes containing human erythrocyte membrane lipids lactosyl ceramide (LacCer) or globotetraosylceramide (Gb4Cer) increases with increasing temperature (PubMed:9990124). Cytotoxic effect on African green monkey kidney (Vero) and Madin-Darby canine kidney (MDCK) cell lines increases with decreasing temperature (PubMed:9133626).</text>
    </temperatureDependence>
</comment>
<comment type="subunit">
    <text evidence="2 3 5 6 7 8 14 16 17 18 19 20 23 24 27 28">Oligomerizes in the human and rabbit erythrocyte membranes (PubMed:10101284, PubMed:10478454, PubMed:10923802, PubMed:11471734, PubMed:11983084, PubMed:14561725, PubMed:19356139, PubMed:22313748, PubMed:23470749, PubMed:23545649, PubMed:23583369, PubMed:24652284, PubMed:7876091, PubMed:8663224, PubMed:9305736, PubMed:9692203). Oligomerization is induced by binding of beta-1,4-linked disaccharide ligands such as lactose, lactulose, N-acetyllactosamine and phenyl-beta-D-galactoside, but only a little by N-acetylgalactosamine and galactose, and not at all by melibiose in aqueous solution in the presence of high salt concentration and pH 10 (PubMed:11983084, PubMed:23470749, PubMed:23545649, PubMed:23583369, PubMed:24652284, PubMed:8663224, PubMed:9305736). Forms heptamers that assemble into larger 21mer oligomers, which may be inserted as a transmembrane pore to the erythrocyte membrane (PubMed:11983084, PubMed:23470749, PubMed:23545649, PubMed:24652284, PubMed:9305736).</text>
</comment>
<comment type="subcellular location">
    <subcellularLocation>
        <location evidence="2 3 6 8 10 13 16 20 23 24 25 26 27">Secreted</location>
    </subcellularLocation>
</comment>
<comment type="tissue specificity">
    <text evidence="2 3 6 8 10 13 20 23 24 25 26 27">Expressed in body fluid (at protein level).</text>
</comment>
<comment type="domain">
    <text evidence="8 10 12">The N-terminal part (1-293) is a carbohydrate recognition domain (CRD) having three ricin B-type lectin domains with two carbohydrate-binding domains (PubMed:14561725). The CRD domain comprises of residues 11-159 and 160-293 and each of them has a beta-trefoil fold (PubMed:15194688, PubMed:17977832). Total of five carbohydrate molecules are bound by the CRD domain (PubMed:17977832). The CRD domain is sufficient for N-acetylgalactosamine (GalNAc)-binding (PubMed:14561725, PubMed:17977832). The CRD domain has weak hemagglutinating activity towards rabbit erythrocytes in the presence or absence of Ca(2+), but it is abolished in the presence of 10 mM EDTA or by lactose (PubMed:14561725).</text>
</comment>
<comment type="domain">
    <text evidence="6 8 11">The C-terminal part (291-442) is essential for oligomerization (PubMed:11471734, PubMed:14561725, PubMed:17965430). Oligomerization of the C-terminal part is induced upon binding of lactose. This C-terminal part is able to cause hemagglutination of rabbit erythrocytes probably due to hydrophobic interaction of the oligomer with the membrane leading to formation of ion-permeable pores in the membrane. Hemagglutinating activity of it is not inhibited by lactose, it is enhanced by Ca(2+) and completeely abolished in the presence of 10 mM EDTA (PubMed:14561725).</text>
</comment>
<comment type="domain">
    <text evidence="9 11">C-terminal part (342-361) has antibacterial activity especially toward Gram-positive bacteria S.aureus IFO 12732, and to a lesser extent toward Gram-positive bacteria B.subtilis IFO 3134 (PubMed:14999010, PubMed:17965430). Weak antibacterial activity toward Gram-negative bacteria P.aeruginosa ATCC 27853, and even weaker toward Gram-negative bacteria E.coli ATCC 43827. This C-terminal part disrupts the bacterial membrane leading to enhanced permeabilization of the bacterial membrane. It has membrane-permeabilizing activity also in artificial lipid vesicles (PubMed:14999010).</text>
</comment>
<comment type="mass spectrometry">
    <text>The measured mass is that of the mature protein.</text>
</comment>
<comment type="biotechnology">
    <text evidence="37 38 39">May have potential as a tool for controlled permeabilization of cell membranes (PubMed:9133626). The C-terminal part (342-361) of this protein may be used to generate mutant peptides having increased antibacterial effect (PubMed:14999010). This protein may also be used for the generation of mosquitoes that are refractory to all species of human Plasmodium (PubMed:18159942).</text>
</comment>
<keyword id="KW-0002">3D-structure</keyword>
<keyword id="KW-0044">Antibiotic</keyword>
<keyword id="KW-0929">Antimicrobial</keyword>
<keyword id="KW-0106">Calcium</keyword>
<keyword id="KW-0204">Cytolysis</keyword>
<keyword id="KW-0903">Direct protein sequencing</keyword>
<keyword id="KW-1015">Disulfide bond</keyword>
<keyword id="KW-0354">Hemolysis</keyword>
<keyword id="KW-0430">Lectin</keyword>
<keyword id="KW-0460">Magnesium</keyword>
<keyword id="KW-0479">Metal-binding</keyword>
<keyword id="KW-0873">Pyrrolidone carboxylic acid</keyword>
<keyword id="KW-0677">Repeat</keyword>
<keyword id="KW-0964">Secreted</keyword>
<sequence>MVSLVPCGFAQVLCTNPLDIGELRNYKSKQCVDIVGNQGSGNIATHDCDGLSDQQIIMCGDGTIRNEARNYCFTPDGSGNANVMSSPCTLYPEIPSSQRWRLGRKKAFTDNGGIEQVATEIINLASGKCLDVEGSDGTGDIGVYDCQNLDDQYFYIRSRGPELFYGRLRNEKSDLCLDVEGSEGKGNVLMYSCEDNLDQWFRYYENGEIVNAKQGMCLDVEGSDGSGNVGIYRCDDLRDQMWSRPNAYCNGDYCSFLNKESNKCLDVSGDQGTGDVGTWQCDGLPDQRFKWVFDDWEVPTATWNMVGCDQNGKVSQQISNTISFSSTVTAGVAVEVSSTIEKGVIFAKASVSVKVTASLSKAWTNSQSGTTAITYTCDNYDSDEEFTRGCMWQLAIETTEVKSGDLLVWNPQIIKCTRSNTAPGCAPFTKCANEDCTFCTDI</sequence>
<protein>
    <recommendedName>
        <fullName evidence="35">Galactose/N-acetylgalactosamine-binding lectin CEL-III</fullName>
        <shortName evidence="35">Gal/GalNAc-binding lectin CEL-III</shortName>
    </recommendedName>
    <alternativeName>
        <fullName evidence="33 34">CEL-III</fullName>
    </alternativeName>
    <alternativeName>
        <fullName evidence="40">Hemolytic lectin CEL-III</fullName>
    </alternativeName>
    <alternativeName>
        <fullName evidence="31 32">Lectin CEL-III</fullName>
    </alternativeName>
</protein>
<gene>
    <name evidence="40" type="primary">cel3</name>
</gene>
<organism evidence="40">
    <name type="scientific">Pseudocnus echinatus</name>
    <name type="common">Sea cucumber</name>
    <name type="synonym">Cucumaria echinata</name>
    <dbReference type="NCBI Taxonomy" id="2592315"/>
    <lineage>
        <taxon>Eukaryota</taxon>
        <taxon>Metazoa</taxon>
        <taxon>Echinodermata</taxon>
        <taxon>Eleutherozoa</taxon>
        <taxon>Echinozoa</taxon>
        <taxon>Holothuroidea</taxon>
        <taxon>Dendrochirotacea</taxon>
        <taxon>Dendrochirotida</taxon>
        <taxon>Cucumariidae</taxon>
        <taxon>Pseudocnus</taxon>
    </lineage>
</organism>